<proteinExistence type="predicted"/>
<keyword id="KW-0244">Early protein</keyword>
<protein>
    <recommendedName>
        <fullName>Uncharacterized 12.6 kDa early protein</fullName>
    </recommendedName>
</protein>
<reference key="1">
    <citation type="journal article" date="1983" name="Gene">
        <title>The nucleotide sequence of the genes encoded in early region 2b of human adenovirus type 7.</title>
        <authorList>
            <person name="Engler J.A."/>
            <person name="Hoppe M.S."/>
            <person name="van Bree M.P."/>
        </authorList>
    </citation>
    <scope>NUCLEOTIDE SEQUENCE [GENOMIC DNA]</scope>
    <source>
        <strain>Gomen</strain>
    </source>
</reference>
<feature type="chain" id="PRO_0000221922" description="Uncharacterized 12.6 kDa early protein">
    <location>
        <begin position="1"/>
        <end position="114"/>
    </location>
</feature>
<feature type="region of interest" description="Disordered" evidence="1">
    <location>
        <begin position="1"/>
        <end position="114"/>
    </location>
</feature>
<feature type="compositionally biased region" description="Low complexity" evidence="1">
    <location>
        <begin position="32"/>
        <end position="43"/>
    </location>
</feature>
<accession>P05670</accession>
<organism>
    <name type="scientific">Human adenovirus B serotype 7</name>
    <name type="common">HAdV-7</name>
    <name type="synonym">Human adenovirus 7</name>
    <dbReference type="NCBI Taxonomy" id="10519"/>
    <lineage>
        <taxon>Viruses</taxon>
        <taxon>Varidnaviria</taxon>
        <taxon>Bamfordvirae</taxon>
        <taxon>Preplasmiviricota</taxon>
        <taxon>Tectiliviricetes</taxon>
        <taxon>Rowavirales</taxon>
        <taxon>Adenoviridae</taxon>
        <taxon>Mastadenovirus</taxon>
        <taxon>Human mastadenovirus B</taxon>
    </lineage>
</organism>
<name>Y126_ADE07</name>
<dbReference type="EMBL" id="X03000">
    <property type="protein sequence ID" value="CAA26772.1"/>
    <property type="molecule type" value="Genomic_DNA"/>
</dbReference>
<sequence length="114" mass="12607">MSTAASSRMRVFSGRSTRTYPRAVPTYHCQPCRRVPSRPCRPVRALDTASKHARSNRATAAQKEKQGHGGSAQGARNPASHRHLHQRTRGDQVPSEPPSRPRKDHASQSPDTAY</sequence>
<evidence type="ECO:0000256" key="1">
    <source>
        <dbReference type="SAM" id="MobiDB-lite"/>
    </source>
</evidence>
<organismHost>
    <name type="scientific">Homo sapiens</name>
    <name type="common">Human</name>
    <dbReference type="NCBI Taxonomy" id="9606"/>
</organismHost>